<comment type="function">
    <text evidence="1">Catalyzes the formation of phosphatidylethanolamine (PtdEtn) from phosphatidylserine (PtdSer).</text>
</comment>
<comment type="catalytic activity">
    <reaction evidence="1">
        <text>a 1,2-diacyl-sn-glycero-3-phospho-L-serine + H(+) = a 1,2-diacyl-sn-glycero-3-phosphoethanolamine + CO2</text>
        <dbReference type="Rhea" id="RHEA:20828"/>
        <dbReference type="ChEBI" id="CHEBI:15378"/>
        <dbReference type="ChEBI" id="CHEBI:16526"/>
        <dbReference type="ChEBI" id="CHEBI:57262"/>
        <dbReference type="ChEBI" id="CHEBI:64612"/>
        <dbReference type="EC" id="4.1.1.65"/>
    </reaction>
</comment>
<comment type="cofactor">
    <cofactor evidence="1">
        <name>pyruvate</name>
        <dbReference type="ChEBI" id="CHEBI:15361"/>
    </cofactor>
    <text evidence="1">Binds 1 pyruvoyl group covalently per subunit.</text>
</comment>
<comment type="pathway">
    <text evidence="1">Phospholipid metabolism; phosphatidylethanolamine biosynthesis; phosphatidylethanolamine from CDP-diacylglycerol: step 2/2.</text>
</comment>
<comment type="subunit">
    <text evidence="1">Heterodimer of a large membrane-associated beta subunit and a small pyruvoyl-containing alpha subunit.</text>
</comment>
<comment type="subcellular location">
    <subcellularLocation>
        <location evidence="1">Cell membrane</location>
        <topology evidence="1">Peripheral membrane protein</topology>
    </subcellularLocation>
</comment>
<comment type="PTM">
    <text evidence="1">Is synthesized initially as an inactive proenzyme. Formation of the active enzyme involves a self-maturation process in which the active site pyruvoyl group is generated from an internal serine residue via an autocatalytic post-translational modification. Two non-identical subunits are generated from the proenzyme in this reaction, and the pyruvate is formed at the N-terminus of the alpha chain, which is derived from the carboxyl end of the proenzyme. The post-translation cleavage follows an unusual pathway, termed non-hydrolytic serinolysis, in which the side chain hydroxyl group of the serine supplies its oxygen atom to form the C-terminus of the beta chain, while the remainder of the serine residue undergoes an oxidative deamination to produce ammonia and the pyruvoyl prosthetic group on the alpha chain.</text>
</comment>
<comment type="similarity">
    <text evidence="1">Belongs to the phosphatidylserine decarboxylase family. PSD-A subfamily.</text>
</comment>
<evidence type="ECO:0000255" key="1">
    <source>
        <dbReference type="HAMAP-Rule" id="MF_00664"/>
    </source>
</evidence>
<keyword id="KW-1003">Cell membrane</keyword>
<keyword id="KW-0210">Decarboxylase</keyword>
<keyword id="KW-0444">Lipid biosynthesis</keyword>
<keyword id="KW-0443">Lipid metabolism</keyword>
<keyword id="KW-0456">Lyase</keyword>
<keyword id="KW-0472">Membrane</keyword>
<keyword id="KW-0594">Phospholipid biosynthesis</keyword>
<keyword id="KW-1208">Phospholipid metabolism</keyword>
<keyword id="KW-0670">Pyruvate</keyword>
<keyword id="KW-0865">Zymogen</keyword>
<sequence>MLTSYGTSTIVKTTLLCLLMCVVALFIPFIAQVWLIGFAVVFLLFTLYFFRDPERKTPNETAIIVSPADGKVMQIAPCTLPDSGLPATRVSIFMSPFNVHVNRVPISGKVTMVRYVPGKFLMAFDHASMEHNERMEIALDNGQFEVRFSQVSGFIARRIVCTLQPNDVVTIGRRFGMIKFGSRVDMVLPATVRCCVQQGDNVHAGETIIGRY</sequence>
<accession>Q3APS7</accession>
<name>PSD_CHLCH</name>
<feature type="chain" id="PRO_0000262203" description="Phosphatidylserine decarboxylase beta chain" evidence="1">
    <location>
        <begin position="1"/>
        <end position="181"/>
    </location>
</feature>
<feature type="chain" id="PRO_0000262204" description="Phosphatidylserine decarboxylase alpha chain" evidence="1">
    <location>
        <begin position="182"/>
        <end position="212"/>
    </location>
</feature>
<feature type="active site" description="Schiff-base intermediate with substrate; via pyruvic acid" evidence="1">
    <location>
        <position position="182"/>
    </location>
</feature>
<feature type="site" description="Cleavage (non-hydrolytic); by autocatalysis" evidence="1">
    <location>
        <begin position="181"/>
        <end position="182"/>
    </location>
</feature>
<feature type="modified residue" description="Pyruvic acid (Ser); by autocatalysis" evidence="1">
    <location>
        <position position="182"/>
    </location>
</feature>
<organism>
    <name type="scientific">Chlorobium chlorochromatii (strain CaD3)</name>
    <dbReference type="NCBI Taxonomy" id="340177"/>
    <lineage>
        <taxon>Bacteria</taxon>
        <taxon>Pseudomonadati</taxon>
        <taxon>Chlorobiota</taxon>
        <taxon>Chlorobiia</taxon>
        <taxon>Chlorobiales</taxon>
        <taxon>Chlorobiaceae</taxon>
        <taxon>Chlorobium/Pelodictyon group</taxon>
        <taxon>Chlorobium</taxon>
    </lineage>
</organism>
<reference key="1">
    <citation type="submission" date="2005-08" db="EMBL/GenBank/DDBJ databases">
        <title>Complete sequence of Chlorobium chlorochromatii CaD3.</title>
        <authorList>
            <consortium name="US DOE Joint Genome Institute"/>
            <person name="Copeland A."/>
            <person name="Lucas S."/>
            <person name="Lapidus A."/>
            <person name="Barry K."/>
            <person name="Detter J.C."/>
            <person name="Glavina T."/>
            <person name="Hammon N."/>
            <person name="Israni S."/>
            <person name="Pitluck S."/>
            <person name="Bryant D."/>
            <person name="Schmutz J."/>
            <person name="Larimer F."/>
            <person name="Land M."/>
            <person name="Kyrpides N."/>
            <person name="Ivanova N."/>
            <person name="Richardson P."/>
        </authorList>
    </citation>
    <scope>NUCLEOTIDE SEQUENCE [LARGE SCALE GENOMIC DNA]</scope>
    <source>
        <strain>CaD3</strain>
    </source>
</reference>
<protein>
    <recommendedName>
        <fullName evidence="1">Phosphatidylserine decarboxylase proenzyme</fullName>
        <ecNumber evidence="1">4.1.1.65</ecNumber>
    </recommendedName>
    <component>
        <recommendedName>
            <fullName evidence="1">Phosphatidylserine decarboxylase alpha chain</fullName>
        </recommendedName>
    </component>
    <component>
        <recommendedName>
            <fullName evidence="1">Phosphatidylserine decarboxylase beta chain</fullName>
        </recommendedName>
    </component>
</protein>
<gene>
    <name evidence="1" type="primary">psd</name>
    <name type="ordered locus">Cag_1747</name>
</gene>
<proteinExistence type="inferred from homology"/>
<dbReference type="EC" id="4.1.1.65" evidence="1"/>
<dbReference type="EMBL" id="CP000108">
    <property type="protein sequence ID" value="ABB28998.1"/>
    <property type="molecule type" value="Genomic_DNA"/>
</dbReference>
<dbReference type="STRING" id="340177.Cag_1747"/>
<dbReference type="KEGG" id="cch:Cag_1747"/>
<dbReference type="eggNOG" id="COG0688">
    <property type="taxonomic scope" value="Bacteria"/>
</dbReference>
<dbReference type="HOGENOM" id="CLU_072492_2_0_10"/>
<dbReference type="OrthoDB" id="9790893at2"/>
<dbReference type="UniPathway" id="UPA00558">
    <property type="reaction ID" value="UER00616"/>
</dbReference>
<dbReference type="GO" id="GO:0005886">
    <property type="term" value="C:plasma membrane"/>
    <property type="evidence" value="ECO:0007669"/>
    <property type="project" value="UniProtKB-SubCell"/>
</dbReference>
<dbReference type="GO" id="GO:0004609">
    <property type="term" value="F:phosphatidylserine decarboxylase activity"/>
    <property type="evidence" value="ECO:0007669"/>
    <property type="project" value="UniProtKB-UniRule"/>
</dbReference>
<dbReference type="GO" id="GO:0006646">
    <property type="term" value="P:phosphatidylethanolamine biosynthetic process"/>
    <property type="evidence" value="ECO:0007669"/>
    <property type="project" value="UniProtKB-UniRule"/>
</dbReference>
<dbReference type="HAMAP" id="MF_00664">
    <property type="entry name" value="PS_decarb_PSD_A"/>
    <property type="match status" value="1"/>
</dbReference>
<dbReference type="InterPro" id="IPR003817">
    <property type="entry name" value="PS_Dcarbxylase"/>
</dbReference>
<dbReference type="InterPro" id="IPR033175">
    <property type="entry name" value="PSD-A"/>
</dbReference>
<dbReference type="NCBIfam" id="NF003678">
    <property type="entry name" value="PRK05305.1-2"/>
    <property type="match status" value="1"/>
</dbReference>
<dbReference type="NCBIfam" id="NF003682">
    <property type="entry name" value="PRK05305.2-2"/>
    <property type="match status" value="1"/>
</dbReference>
<dbReference type="NCBIfam" id="NF003685">
    <property type="entry name" value="PRK05305.2-5"/>
    <property type="match status" value="1"/>
</dbReference>
<dbReference type="PANTHER" id="PTHR35809">
    <property type="entry name" value="ARCHAETIDYLSERINE DECARBOXYLASE PROENZYME-RELATED"/>
    <property type="match status" value="1"/>
</dbReference>
<dbReference type="PANTHER" id="PTHR35809:SF1">
    <property type="entry name" value="ARCHAETIDYLSERINE DECARBOXYLASE PROENZYME-RELATED"/>
    <property type="match status" value="1"/>
</dbReference>
<dbReference type="Pfam" id="PF02666">
    <property type="entry name" value="PS_Dcarbxylase"/>
    <property type="match status" value="1"/>
</dbReference>